<protein>
    <recommendedName>
        <fullName>Sperm protein associated with the nucleus on the X chromosome N5</fullName>
    </recommendedName>
    <alternativeName>
        <fullName>Nuclear-associated protein SPAN-Xn5</fullName>
        <shortName>SPANX-N5</shortName>
    </alternativeName>
    <alternativeName>
        <fullName>SPANX family member N5</fullName>
    </alternativeName>
</protein>
<reference key="1">
    <citation type="journal article" date="2004" name="Proc. Natl. Acad. Sci. U.S.A.">
        <title>The SPANX gene family of cancer/testis-specific antigens: rapid evolution and amplification in African great apes and hominids.</title>
        <authorList>
            <person name="Kouprina N."/>
            <person name="Mullokandov M."/>
            <person name="Rogozin I.B."/>
            <person name="Collins N.K."/>
            <person name="Solomon G."/>
            <person name="Otstot J."/>
            <person name="Risinger J.I."/>
            <person name="Koonin E.V."/>
            <person name="Barrett J.C."/>
            <person name="Larionov V."/>
        </authorList>
    </citation>
    <scope>NUCLEOTIDE SEQUENCE [GENOMIC DNA]</scope>
</reference>
<reference key="2">
    <citation type="journal article" date="2005" name="Nature">
        <title>The DNA sequence of the human X chromosome.</title>
        <authorList>
            <person name="Ross M.T."/>
            <person name="Grafham D.V."/>
            <person name="Coffey A.J."/>
            <person name="Scherer S."/>
            <person name="McLay K."/>
            <person name="Muzny D."/>
            <person name="Platzer M."/>
            <person name="Howell G.R."/>
            <person name="Burrows C."/>
            <person name="Bird C.P."/>
            <person name="Frankish A."/>
            <person name="Lovell F.L."/>
            <person name="Howe K.L."/>
            <person name="Ashurst J.L."/>
            <person name="Fulton R.S."/>
            <person name="Sudbrak R."/>
            <person name="Wen G."/>
            <person name="Jones M.C."/>
            <person name="Hurles M.E."/>
            <person name="Andrews T.D."/>
            <person name="Scott C.E."/>
            <person name="Searle S."/>
            <person name="Ramser J."/>
            <person name="Whittaker A."/>
            <person name="Deadman R."/>
            <person name="Carter N.P."/>
            <person name="Hunt S.E."/>
            <person name="Chen R."/>
            <person name="Cree A."/>
            <person name="Gunaratne P."/>
            <person name="Havlak P."/>
            <person name="Hodgson A."/>
            <person name="Metzker M.L."/>
            <person name="Richards S."/>
            <person name="Scott G."/>
            <person name="Steffen D."/>
            <person name="Sodergren E."/>
            <person name="Wheeler D.A."/>
            <person name="Worley K.C."/>
            <person name="Ainscough R."/>
            <person name="Ambrose K.D."/>
            <person name="Ansari-Lari M.A."/>
            <person name="Aradhya S."/>
            <person name="Ashwell R.I."/>
            <person name="Babbage A.K."/>
            <person name="Bagguley C.L."/>
            <person name="Ballabio A."/>
            <person name="Banerjee R."/>
            <person name="Barker G.E."/>
            <person name="Barlow K.F."/>
            <person name="Barrett I.P."/>
            <person name="Bates K.N."/>
            <person name="Beare D.M."/>
            <person name="Beasley H."/>
            <person name="Beasley O."/>
            <person name="Beck A."/>
            <person name="Bethel G."/>
            <person name="Blechschmidt K."/>
            <person name="Brady N."/>
            <person name="Bray-Allen S."/>
            <person name="Bridgeman A.M."/>
            <person name="Brown A.J."/>
            <person name="Brown M.J."/>
            <person name="Bonnin D."/>
            <person name="Bruford E.A."/>
            <person name="Buhay C."/>
            <person name="Burch P."/>
            <person name="Burford D."/>
            <person name="Burgess J."/>
            <person name="Burrill W."/>
            <person name="Burton J."/>
            <person name="Bye J.M."/>
            <person name="Carder C."/>
            <person name="Carrel L."/>
            <person name="Chako J."/>
            <person name="Chapman J.C."/>
            <person name="Chavez D."/>
            <person name="Chen E."/>
            <person name="Chen G."/>
            <person name="Chen Y."/>
            <person name="Chen Z."/>
            <person name="Chinault C."/>
            <person name="Ciccodicola A."/>
            <person name="Clark S.Y."/>
            <person name="Clarke G."/>
            <person name="Clee C.M."/>
            <person name="Clegg S."/>
            <person name="Clerc-Blankenburg K."/>
            <person name="Clifford K."/>
            <person name="Cobley V."/>
            <person name="Cole C.G."/>
            <person name="Conquer J.S."/>
            <person name="Corby N."/>
            <person name="Connor R.E."/>
            <person name="David R."/>
            <person name="Davies J."/>
            <person name="Davis C."/>
            <person name="Davis J."/>
            <person name="Delgado O."/>
            <person name="Deshazo D."/>
            <person name="Dhami P."/>
            <person name="Ding Y."/>
            <person name="Dinh H."/>
            <person name="Dodsworth S."/>
            <person name="Draper H."/>
            <person name="Dugan-Rocha S."/>
            <person name="Dunham A."/>
            <person name="Dunn M."/>
            <person name="Durbin K.J."/>
            <person name="Dutta I."/>
            <person name="Eades T."/>
            <person name="Ellwood M."/>
            <person name="Emery-Cohen A."/>
            <person name="Errington H."/>
            <person name="Evans K.L."/>
            <person name="Faulkner L."/>
            <person name="Francis F."/>
            <person name="Frankland J."/>
            <person name="Fraser A.E."/>
            <person name="Galgoczy P."/>
            <person name="Gilbert J."/>
            <person name="Gill R."/>
            <person name="Gloeckner G."/>
            <person name="Gregory S.G."/>
            <person name="Gribble S."/>
            <person name="Griffiths C."/>
            <person name="Grocock R."/>
            <person name="Gu Y."/>
            <person name="Gwilliam R."/>
            <person name="Hamilton C."/>
            <person name="Hart E.A."/>
            <person name="Hawes A."/>
            <person name="Heath P.D."/>
            <person name="Heitmann K."/>
            <person name="Hennig S."/>
            <person name="Hernandez J."/>
            <person name="Hinzmann B."/>
            <person name="Ho S."/>
            <person name="Hoffs M."/>
            <person name="Howden P.J."/>
            <person name="Huckle E.J."/>
            <person name="Hume J."/>
            <person name="Hunt P.J."/>
            <person name="Hunt A.R."/>
            <person name="Isherwood J."/>
            <person name="Jacob L."/>
            <person name="Johnson D."/>
            <person name="Jones S."/>
            <person name="de Jong P.J."/>
            <person name="Joseph S.S."/>
            <person name="Keenan S."/>
            <person name="Kelly S."/>
            <person name="Kershaw J.K."/>
            <person name="Khan Z."/>
            <person name="Kioschis P."/>
            <person name="Klages S."/>
            <person name="Knights A.J."/>
            <person name="Kosiura A."/>
            <person name="Kovar-Smith C."/>
            <person name="Laird G.K."/>
            <person name="Langford C."/>
            <person name="Lawlor S."/>
            <person name="Leversha M."/>
            <person name="Lewis L."/>
            <person name="Liu W."/>
            <person name="Lloyd C."/>
            <person name="Lloyd D.M."/>
            <person name="Loulseged H."/>
            <person name="Loveland J.E."/>
            <person name="Lovell J.D."/>
            <person name="Lozado R."/>
            <person name="Lu J."/>
            <person name="Lyne R."/>
            <person name="Ma J."/>
            <person name="Maheshwari M."/>
            <person name="Matthews L.H."/>
            <person name="McDowall J."/>
            <person name="McLaren S."/>
            <person name="McMurray A."/>
            <person name="Meidl P."/>
            <person name="Meitinger T."/>
            <person name="Milne S."/>
            <person name="Miner G."/>
            <person name="Mistry S.L."/>
            <person name="Morgan M."/>
            <person name="Morris S."/>
            <person name="Mueller I."/>
            <person name="Mullikin J.C."/>
            <person name="Nguyen N."/>
            <person name="Nordsiek G."/>
            <person name="Nyakatura G."/>
            <person name="O'dell C.N."/>
            <person name="Okwuonu G."/>
            <person name="Palmer S."/>
            <person name="Pandian R."/>
            <person name="Parker D."/>
            <person name="Parrish J."/>
            <person name="Pasternak S."/>
            <person name="Patel D."/>
            <person name="Pearce A.V."/>
            <person name="Pearson D.M."/>
            <person name="Pelan S.E."/>
            <person name="Perez L."/>
            <person name="Porter K.M."/>
            <person name="Ramsey Y."/>
            <person name="Reichwald K."/>
            <person name="Rhodes S."/>
            <person name="Ridler K.A."/>
            <person name="Schlessinger D."/>
            <person name="Schueler M.G."/>
            <person name="Sehra H.K."/>
            <person name="Shaw-Smith C."/>
            <person name="Shen H."/>
            <person name="Sheridan E.M."/>
            <person name="Shownkeen R."/>
            <person name="Skuce C.D."/>
            <person name="Smith M.L."/>
            <person name="Sotheran E.C."/>
            <person name="Steingruber H.E."/>
            <person name="Steward C.A."/>
            <person name="Storey R."/>
            <person name="Swann R.M."/>
            <person name="Swarbreck D."/>
            <person name="Tabor P.E."/>
            <person name="Taudien S."/>
            <person name="Taylor T."/>
            <person name="Teague B."/>
            <person name="Thomas K."/>
            <person name="Thorpe A."/>
            <person name="Timms K."/>
            <person name="Tracey A."/>
            <person name="Trevanion S."/>
            <person name="Tromans A.C."/>
            <person name="d'Urso M."/>
            <person name="Verduzco D."/>
            <person name="Villasana D."/>
            <person name="Waldron L."/>
            <person name="Wall M."/>
            <person name="Wang Q."/>
            <person name="Warren J."/>
            <person name="Warry G.L."/>
            <person name="Wei X."/>
            <person name="West A."/>
            <person name="Whitehead S.L."/>
            <person name="Whiteley M.N."/>
            <person name="Wilkinson J.E."/>
            <person name="Willey D.L."/>
            <person name="Williams G."/>
            <person name="Williams L."/>
            <person name="Williamson A."/>
            <person name="Williamson H."/>
            <person name="Wilming L."/>
            <person name="Woodmansey R.L."/>
            <person name="Wray P.W."/>
            <person name="Yen J."/>
            <person name="Zhang J."/>
            <person name="Zhou J."/>
            <person name="Zoghbi H."/>
            <person name="Zorilla S."/>
            <person name="Buck D."/>
            <person name="Reinhardt R."/>
            <person name="Poustka A."/>
            <person name="Rosenthal A."/>
            <person name="Lehrach H."/>
            <person name="Meindl A."/>
            <person name="Minx P.J."/>
            <person name="Hillier L.W."/>
            <person name="Willard H.F."/>
            <person name="Wilson R.K."/>
            <person name="Waterston R.H."/>
            <person name="Rice C.M."/>
            <person name="Vaudin M."/>
            <person name="Coulson A."/>
            <person name="Nelson D.L."/>
            <person name="Weinstock G."/>
            <person name="Sulston J.E."/>
            <person name="Durbin R.M."/>
            <person name="Hubbard T."/>
            <person name="Gibbs R.A."/>
            <person name="Beck S."/>
            <person name="Rogers J."/>
            <person name="Bentley D.R."/>
        </authorList>
    </citation>
    <scope>NUCLEOTIDE SEQUENCE [LARGE SCALE GENOMIC DNA]</scope>
</reference>
<evidence type="ECO:0000256" key="1">
    <source>
        <dbReference type="SAM" id="MobiDB-lite"/>
    </source>
</evidence>
<evidence type="ECO:0000305" key="2"/>
<dbReference type="EMBL" id="AY825033">
    <property type="protein sequence ID" value="AAV97589.1"/>
    <property type="molecule type" value="Genomic_DNA"/>
</dbReference>
<dbReference type="EMBL" id="AL445236">
    <property type="protein sequence ID" value="CAI41620.1"/>
    <property type="molecule type" value="Genomic_DNA"/>
</dbReference>
<dbReference type="CCDS" id="CCDS35295.1"/>
<dbReference type="RefSeq" id="NP_001009616.1">
    <property type="nucleotide sequence ID" value="NM_001009616.4"/>
</dbReference>
<dbReference type="BioGRID" id="138948">
    <property type="interactions" value="16"/>
</dbReference>
<dbReference type="FunCoup" id="Q5MJ07">
    <property type="interactions" value="3"/>
</dbReference>
<dbReference type="IntAct" id="Q5MJ07">
    <property type="interactions" value="16"/>
</dbReference>
<dbReference type="STRING" id="9606.ENSP00000364661"/>
<dbReference type="BioMuta" id="SPANXN5"/>
<dbReference type="DMDM" id="74743050"/>
<dbReference type="MassIVE" id="Q5MJ07"/>
<dbReference type="PaxDb" id="9606-ENSP00000364661"/>
<dbReference type="ProteomicsDB" id="63579"/>
<dbReference type="DNASU" id="494197"/>
<dbReference type="Ensembl" id="ENST00000375511.4">
    <property type="protein sequence ID" value="ENSP00000364661.3"/>
    <property type="gene ID" value="ENSG00000204363.5"/>
</dbReference>
<dbReference type="GeneID" id="494197"/>
<dbReference type="KEGG" id="hsa:494197"/>
<dbReference type="MANE-Select" id="ENST00000375511.4">
    <property type="protein sequence ID" value="ENSP00000364661.3"/>
    <property type="RefSeq nucleotide sequence ID" value="NM_001009616.4"/>
    <property type="RefSeq protein sequence ID" value="NP_001009616.1"/>
</dbReference>
<dbReference type="UCSC" id="uc004drc.2">
    <property type="organism name" value="human"/>
</dbReference>
<dbReference type="AGR" id="HGNC:33178"/>
<dbReference type="CTD" id="494197"/>
<dbReference type="GeneCards" id="SPANXN5"/>
<dbReference type="HGNC" id="HGNC:33178">
    <property type="gene designation" value="SPANXN5"/>
</dbReference>
<dbReference type="HPA" id="ENSG00000204363">
    <property type="expression patterns" value="Tissue enriched (testis)"/>
</dbReference>
<dbReference type="MIM" id="300668">
    <property type="type" value="gene"/>
</dbReference>
<dbReference type="neXtProt" id="NX_Q5MJ07"/>
<dbReference type="OpenTargets" id="ENSG00000204363"/>
<dbReference type="PharmGKB" id="PA162404403"/>
<dbReference type="VEuPathDB" id="HostDB:ENSG00000204363"/>
<dbReference type="eggNOG" id="ENOG502RXMW">
    <property type="taxonomic scope" value="Eukaryota"/>
</dbReference>
<dbReference type="GeneTree" id="ENSGT00940000164738"/>
<dbReference type="HOGENOM" id="CLU_140435_1_0_1"/>
<dbReference type="InParanoid" id="Q5MJ07"/>
<dbReference type="OMA" id="RVLVFCY"/>
<dbReference type="OrthoDB" id="9531421at2759"/>
<dbReference type="PAN-GO" id="Q5MJ07">
    <property type="GO annotations" value="0 GO annotations based on evolutionary models"/>
</dbReference>
<dbReference type="PhylomeDB" id="Q5MJ07"/>
<dbReference type="PathwayCommons" id="Q5MJ07"/>
<dbReference type="BioGRID-ORCS" id="494197">
    <property type="hits" value="11 hits in 664 CRISPR screens"/>
</dbReference>
<dbReference type="GenomeRNAi" id="494197"/>
<dbReference type="Pharos" id="Q5MJ07">
    <property type="development level" value="Tdark"/>
</dbReference>
<dbReference type="PRO" id="PR:Q5MJ07"/>
<dbReference type="Proteomes" id="UP000005640">
    <property type="component" value="Chromosome X"/>
</dbReference>
<dbReference type="RNAct" id="Q5MJ07">
    <property type="molecule type" value="protein"/>
</dbReference>
<dbReference type="Bgee" id="ENSG00000204363">
    <property type="expression patterns" value="Expressed in male germ line stem cell (sensu Vertebrata) in testis and 23 other cell types or tissues"/>
</dbReference>
<dbReference type="InterPro" id="IPR010007">
    <property type="entry name" value="SPAN-X_fam"/>
</dbReference>
<dbReference type="Pfam" id="PF07458">
    <property type="entry name" value="SPAN-X"/>
    <property type="match status" value="1"/>
</dbReference>
<comment type="similarity">
    <text evidence="2">Belongs to the SPAN-X family.</text>
</comment>
<gene>
    <name type="primary">SPANXN5</name>
</gene>
<proteinExistence type="inferred from homology"/>
<accession>Q5MJ07</accession>
<keyword id="KW-1185">Reference proteome</keyword>
<organism>
    <name type="scientific">Homo sapiens</name>
    <name type="common">Human</name>
    <dbReference type="NCBI Taxonomy" id="9606"/>
    <lineage>
        <taxon>Eukaryota</taxon>
        <taxon>Metazoa</taxon>
        <taxon>Chordata</taxon>
        <taxon>Craniata</taxon>
        <taxon>Vertebrata</taxon>
        <taxon>Euteleostomi</taxon>
        <taxon>Mammalia</taxon>
        <taxon>Eutheria</taxon>
        <taxon>Euarchontoglires</taxon>
        <taxon>Primates</taxon>
        <taxon>Haplorrhini</taxon>
        <taxon>Catarrhini</taxon>
        <taxon>Hominidae</taxon>
        <taxon>Homo</taxon>
    </lineage>
</organism>
<name>SPXN5_HUMAN</name>
<sequence length="72" mass="8277">MEKPTSSTNGEKRKSPCDSNSKNDEMQETPNRDLVLEPSLKKMKTSEYSTVLVLCYRKTKKIHSNQLENDQS</sequence>
<feature type="chain" id="PRO_0000285542" description="Sperm protein associated with the nucleus on the X chromosome N5">
    <location>
        <begin position="1"/>
        <end position="72"/>
    </location>
</feature>
<feature type="region of interest" description="Disordered" evidence="1">
    <location>
        <begin position="1"/>
        <end position="40"/>
    </location>
</feature>
<feature type="compositionally biased region" description="Basic and acidic residues" evidence="1">
    <location>
        <begin position="10"/>
        <end position="35"/>
    </location>
</feature>